<keyword id="KW-0066">ATP synthesis</keyword>
<keyword id="KW-1003">Cell membrane</keyword>
<keyword id="KW-0375">Hydrogen ion transport</keyword>
<keyword id="KW-0406">Ion transport</keyword>
<keyword id="KW-0472">Membrane</keyword>
<keyword id="KW-1185">Reference proteome</keyword>
<keyword id="KW-0813">Transport</keyword>
<gene>
    <name evidence="1" type="primary">atpF</name>
    <name type="ordered locus">UNCMA_10670</name>
    <name type="ORF">RCIX2029</name>
</gene>
<reference key="1">
    <citation type="journal article" date="2006" name="Science">
        <title>Genome of rice cluster I archaea -- the key methane producers in the rice rhizosphere.</title>
        <authorList>
            <person name="Erkel C."/>
            <person name="Kube M."/>
            <person name="Reinhardt R."/>
            <person name="Liesack W."/>
        </authorList>
    </citation>
    <scope>NUCLEOTIDE SEQUENCE [LARGE SCALE GENOMIC DNA]</scope>
    <source>
        <strain>DSM 22066 / NBRC 105507 / MRE50</strain>
    </source>
</reference>
<proteinExistence type="inferred from homology"/>
<feature type="chain" id="PRO_1000059439" description="A-type ATP synthase subunit F">
    <location>
        <begin position="1"/>
        <end position="99"/>
    </location>
</feature>
<comment type="function">
    <text evidence="1">Component of the A-type ATP synthase that produces ATP from ADP in the presence of a proton gradient across the membrane.</text>
</comment>
<comment type="subunit">
    <text evidence="1">Has multiple subunits with at least A(3), B(3), C, D, E, F, H, I and proteolipid K(x).</text>
</comment>
<comment type="subcellular location">
    <subcellularLocation>
        <location evidence="1">Cell membrane</location>
        <topology evidence="1">Peripheral membrane protein</topology>
    </subcellularLocation>
</comment>
<comment type="similarity">
    <text evidence="1">Belongs to the V-ATPase F subunit family.</text>
</comment>
<evidence type="ECO:0000255" key="1">
    <source>
        <dbReference type="HAMAP-Rule" id="MF_00312"/>
    </source>
</evidence>
<organism>
    <name type="scientific">Methanocella arvoryzae (strain DSM 22066 / NBRC 105507 / MRE50)</name>
    <dbReference type="NCBI Taxonomy" id="351160"/>
    <lineage>
        <taxon>Archaea</taxon>
        <taxon>Methanobacteriati</taxon>
        <taxon>Methanobacteriota</taxon>
        <taxon>Stenosarchaea group</taxon>
        <taxon>Methanomicrobia</taxon>
        <taxon>Methanocellales</taxon>
        <taxon>Methanocellaceae</taxon>
        <taxon>Methanocella</taxon>
    </lineage>
</organism>
<dbReference type="EMBL" id="AM114193">
    <property type="protein sequence ID" value="CAJ37179.1"/>
    <property type="molecule type" value="Genomic_DNA"/>
</dbReference>
<dbReference type="RefSeq" id="WP_012035395.1">
    <property type="nucleotide sequence ID" value="NC_009464.1"/>
</dbReference>
<dbReference type="SMR" id="Q0W364"/>
<dbReference type="STRING" id="351160.RCIX2029"/>
<dbReference type="GeneID" id="5143469"/>
<dbReference type="KEGG" id="rci:RCIX2029"/>
<dbReference type="PATRIC" id="fig|351160.9.peg.1102"/>
<dbReference type="eggNOG" id="arCOG04102">
    <property type="taxonomic scope" value="Archaea"/>
</dbReference>
<dbReference type="OrthoDB" id="24971at2157"/>
<dbReference type="Proteomes" id="UP000000663">
    <property type="component" value="Chromosome"/>
</dbReference>
<dbReference type="GO" id="GO:0005886">
    <property type="term" value="C:plasma membrane"/>
    <property type="evidence" value="ECO:0007669"/>
    <property type="project" value="UniProtKB-SubCell"/>
</dbReference>
<dbReference type="GO" id="GO:0005524">
    <property type="term" value="F:ATP binding"/>
    <property type="evidence" value="ECO:0007669"/>
    <property type="project" value="UniProtKB-UniRule"/>
</dbReference>
<dbReference type="GO" id="GO:0046933">
    <property type="term" value="F:proton-transporting ATP synthase activity, rotational mechanism"/>
    <property type="evidence" value="ECO:0007669"/>
    <property type="project" value="UniProtKB-UniRule"/>
</dbReference>
<dbReference type="GO" id="GO:0046961">
    <property type="term" value="F:proton-transporting ATPase activity, rotational mechanism"/>
    <property type="evidence" value="ECO:0007669"/>
    <property type="project" value="InterPro"/>
</dbReference>
<dbReference type="GO" id="GO:0042777">
    <property type="term" value="P:proton motive force-driven plasma membrane ATP synthesis"/>
    <property type="evidence" value="ECO:0007669"/>
    <property type="project" value="UniProtKB-UniRule"/>
</dbReference>
<dbReference type="Gene3D" id="3.40.50.10580">
    <property type="entry name" value="ATPase, V1 complex, subunit F"/>
    <property type="match status" value="1"/>
</dbReference>
<dbReference type="HAMAP" id="MF_00312">
    <property type="entry name" value="ATP_synth_F_arch"/>
    <property type="match status" value="1"/>
</dbReference>
<dbReference type="InterPro" id="IPR008218">
    <property type="entry name" value="ATPase_V1-cplx_f_g_su"/>
</dbReference>
<dbReference type="InterPro" id="IPR022944">
    <property type="entry name" value="ATPase_V1-cplx_fsu_bac/arc"/>
</dbReference>
<dbReference type="InterPro" id="IPR036906">
    <property type="entry name" value="ATPase_V1_fsu_sf"/>
</dbReference>
<dbReference type="NCBIfam" id="NF002577">
    <property type="entry name" value="PRK02228.1"/>
    <property type="match status" value="1"/>
</dbReference>
<dbReference type="Pfam" id="PF01990">
    <property type="entry name" value="ATP-synt_F"/>
    <property type="match status" value="1"/>
</dbReference>
<dbReference type="SUPFAM" id="SSF159468">
    <property type="entry name" value="AtpF-like"/>
    <property type="match status" value="1"/>
</dbReference>
<name>AATF_METAR</name>
<sequence>MEIAVVGKSEFVVGFRLAGIHKTYEVKNDKDLESKIRECLTDRNLGIIVLHSDDLKHISPGLQKVIDESVEPTFIAIGSKEDAGLRDKIKRAIGVDLWK</sequence>
<protein>
    <recommendedName>
        <fullName evidence="1">A-type ATP synthase subunit F</fullName>
    </recommendedName>
</protein>
<accession>Q0W364</accession>